<gene>
    <name evidence="1" type="primary">recA</name>
    <name type="ordered locus">MS2243</name>
</gene>
<comment type="function">
    <text evidence="1">Can catalyze the hydrolysis of ATP in the presence of single-stranded DNA, the ATP-dependent uptake of single-stranded DNA by duplex DNA, and the ATP-dependent hybridization of homologous single-stranded DNAs. It interacts with LexA causing its activation and leading to its autocatalytic cleavage.</text>
</comment>
<comment type="subcellular location">
    <subcellularLocation>
        <location evidence="1">Cytoplasm</location>
    </subcellularLocation>
</comment>
<comment type="similarity">
    <text evidence="1">Belongs to the RecA family.</text>
</comment>
<organism>
    <name type="scientific">Mannheimia succiniciproducens (strain KCTC 0769BP / MBEL55E)</name>
    <dbReference type="NCBI Taxonomy" id="221988"/>
    <lineage>
        <taxon>Bacteria</taxon>
        <taxon>Pseudomonadati</taxon>
        <taxon>Pseudomonadota</taxon>
        <taxon>Gammaproteobacteria</taxon>
        <taxon>Pasteurellales</taxon>
        <taxon>Pasteurellaceae</taxon>
        <taxon>Basfia</taxon>
    </lineage>
</organism>
<keyword id="KW-0067">ATP-binding</keyword>
<keyword id="KW-0963">Cytoplasm</keyword>
<keyword id="KW-0227">DNA damage</keyword>
<keyword id="KW-0233">DNA recombination</keyword>
<keyword id="KW-0234">DNA repair</keyword>
<keyword id="KW-0238">DNA-binding</keyword>
<keyword id="KW-0547">Nucleotide-binding</keyword>
<keyword id="KW-0742">SOS response</keyword>
<accession>Q65QB0</accession>
<proteinExistence type="inferred from homology"/>
<reference key="1">
    <citation type="journal article" date="2004" name="Nat. Biotechnol.">
        <title>The genome sequence of the capnophilic rumen bacterium Mannheimia succiniciproducens.</title>
        <authorList>
            <person name="Hong S.H."/>
            <person name="Kim J.S."/>
            <person name="Lee S.Y."/>
            <person name="In Y.H."/>
            <person name="Choi S.S."/>
            <person name="Rih J.-K."/>
            <person name="Kim C.H."/>
            <person name="Jeong H."/>
            <person name="Hur C.G."/>
            <person name="Kim J.J."/>
        </authorList>
    </citation>
    <scope>NUCLEOTIDE SEQUENCE [LARGE SCALE GENOMIC DNA]</scope>
    <source>
        <strain>KCTC 0769BP / MBEL55E</strain>
    </source>
</reference>
<sequence length="351" mass="37460">MATNDEKSKALAAALGQIEKQFGKGAIMKLGDTQALDVESISTGSIGLDVALGIGGLPMGRVVEIFGPESSGKTTLTLSVIAQAQKAGKVCAFIDAEHALDPIYAAKLGVDVKELLVSQPDNGEQALEICDALVRSGAVDVIIVDSVAALTPKAEIEGDMGDSHVGLQARLMSQALRKLTGQIKNANCLVVFINQIRMKIGVMFGNPETTTGGNALKFYSSVRLDIRRVGAVKDGDEIIGNETRVKVVKNKLAPPFRQVDFQILYGEGISKNGELIELGVKHKLVDKSGAWYAYNGDKIGQGKANAMKWLAENPTVAAELENKIRAELLANPEQALLADIETNSEEKEDFE</sequence>
<feature type="chain" id="PRO_0000122753" description="Protein RecA">
    <location>
        <begin position="1"/>
        <end position="351"/>
    </location>
</feature>
<feature type="binding site" evidence="1">
    <location>
        <begin position="67"/>
        <end position="74"/>
    </location>
    <ligand>
        <name>ATP</name>
        <dbReference type="ChEBI" id="CHEBI:30616"/>
    </ligand>
</feature>
<name>RECA_MANSM</name>
<dbReference type="EMBL" id="AE016827">
    <property type="protein sequence ID" value="AAU38850.1"/>
    <property type="molecule type" value="Genomic_DNA"/>
</dbReference>
<dbReference type="RefSeq" id="WP_011201394.1">
    <property type="nucleotide sequence ID" value="NC_006300.1"/>
</dbReference>
<dbReference type="SMR" id="Q65QB0"/>
<dbReference type="STRING" id="221988.MS2243"/>
<dbReference type="KEGG" id="msu:MS2243"/>
<dbReference type="eggNOG" id="COG0468">
    <property type="taxonomic scope" value="Bacteria"/>
</dbReference>
<dbReference type="HOGENOM" id="CLU_040469_3_2_6"/>
<dbReference type="OrthoDB" id="9776733at2"/>
<dbReference type="Proteomes" id="UP000000607">
    <property type="component" value="Chromosome"/>
</dbReference>
<dbReference type="GO" id="GO:0005829">
    <property type="term" value="C:cytosol"/>
    <property type="evidence" value="ECO:0007669"/>
    <property type="project" value="TreeGrafter"/>
</dbReference>
<dbReference type="GO" id="GO:0005524">
    <property type="term" value="F:ATP binding"/>
    <property type="evidence" value="ECO:0007669"/>
    <property type="project" value="UniProtKB-UniRule"/>
</dbReference>
<dbReference type="GO" id="GO:0016887">
    <property type="term" value="F:ATP hydrolysis activity"/>
    <property type="evidence" value="ECO:0007669"/>
    <property type="project" value="InterPro"/>
</dbReference>
<dbReference type="GO" id="GO:0140664">
    <property type="term" value="F:ATP-dependent DNA damage sensor activity"/>
    <property type="evidence" value="ECO:0007669"/>
    <property type="project" value="InterPro"/>
</dbReference>
<dbReference type="GO" id="GO:0003684">
    <property type="term" value="F:damaged DNA binding"/>
    <property type="evidence" value="ECO:0007669"/>
    <property type="project" value="UniProtKB-UniRule"/>
</dbReference>
<dbReference type="GO" id="GO:0003697">
    <property type="term" value="F:single-stranded DNA binding"/>
    <property type="evidence" value="ECO:0007669"/>
    <property type="project" value="UniProtKB-UniRule"/>
</dbReference>
<dbReference type="GO" id="GO:0006310">
    <property type="term" value="P:DNA recombination"/>
    <property type="evidence" value="ECO:0007669"/>
    <property type="project" value="UniProtKB-UniRule"/>
</dbReference>
<dbReference type="GO" id="GO:0006281">
    <property type="term" value="P:DNA repair"/>
    <property type="evidence" value="ECO:0007669"/>
    <property type="project" value="UniProtKB-UniRule"/>
</dbReference>
<dbReference type="GO" id="GO:0009432">
    <property type="term" value="P:SOS response"/>
    <property type="evidence" value="ECO:0007669"/>
    <property type="project" value="UniProtKB-UniRule"/>
</dbReference>
<dbReference type="CDD" id="cd00983">
    <property type="entry name" value="RecA"/>
    <property type="match status" value="1"/>
</dbReference>
<dbReference type="FunFam" id="3.40.50.300:FF:000087">
    <property type="entry name" value="Recombinase RecA"/>
    <property type="match status" value="1"/>
</dbReference>
<dbReference type="Gene3D" id="3.40.50.300">
    <property type="entry name" value="P-loop containing nucleotide triphosphate hydrolases"/>
    <property type="match status" value="1"/>
</dbReference>
<dbReference type="HAMAP" id="MF_00268">
    <property type="entry name" value="RecA"/>
    <property type="match status" value="1"/>
</dbReference>
<dbReference type="InterPro" id="IPR003593">
    <property type="entry name" value="AAA+_ATPase"/>
</dbReference>
<dbReference type="InterPro" id="IPR013765">
    <property type="entry name" value="DNA_recomb/repair_RecA"/>
</dbReference>
<dbReference type="InterPro" id="IPR020584">
    <property type="entry name" value="DNA_recomb/repair_RecA_CS"/>
</dbReference>
<dbReference type="InterPro" id="IPR027417">
    <property type="entry name" value="P-loop_NTPase"/>
</dbReference>
<dbReference type="InterPro" id="IPR049261">
    <property type="entry name" value="RecA-like_C"/>
</dbReference>
<dbReference type="InterPro" id="IPR049428">
    <property type="entry name" value="RecA-like_N"/>
</dbReference>
<dbReference type="InterPro" id="IPR020588">
    <property type="entry name" value="RecA_ATP-bd"/>
</dbReference>
<dbReference type="InterPro" id="IPR023400">
    <property type="entry name" value="RecA_C_sf"/>
</dbReference>
<dbReference type="InterPro" id="IPR020587">
    <property type="entry name" value="RecA_monomer-monomer_interface"/>
</dbReference>
<dbReference type="NCBIfam" id="TIGR02012">
    <property type="entry name" value="tigrfam_recA"/>
    <property type="match status" value="1"/>
</dbReference>
<dbReference type="PANTHER" id="PTHR45900:SF1">
    <property type="entry name" value="MITOCHONDRIAL DNA REPAIR PROTEIN RECA HOMOLOG-RELATED"/>
    <property type="match status" value="1"/>
</dbReference>
<dbReference type="PANTHER" id="PTHR45900">
    <property type="entry name" value="RECA"/>
    <property type="match status" value="1"/>
</dbReference>
<dbReference type="Pfam" id="PF00154">
    <property type="entry name" value="RecA"/>
    <property type="match status" value="1"/>
</dbReference>
<dbReference type="Pfam" id="PF21096">
    <property type="entry name" value="RecA_C"/>
    <property type="match status" value="1"/>
</dbReference>
<dbReference type="PRINTS" id="PR00142">
    <property type="entry name" value="RECA"/>
</dbReference>
<dbReference type="SMART" id="SM00382">
    <property type="entry name" value="AAA"/>
    <property type="match status" value="1"/>
</dbReference>
<dbReference type="SUPFAM" id="SSF52540">
    <property type="entry name" value="P-loop containing nucleoside triphosphate hydrolases"/>
    <property type="match status" value="1"/>
</dbReference>
<dbReference type="SUPFAM" id="SSF54752">
    <property type="entry name" value="RecA protein, C-terminal domain"/>
    <property type="match status" value="1"/>
</dbReference>
<dbReference type="PROSITE" id="PS00321">
    <property type="entry name" value="RECA_1"/>
    <property type="match status" value="1"/>
</dbReference>
<dbReference type="PROSITE" id="PS50162">
    <property type="entry name" value="RECA_2"/>
    <property type="match status" value="1"/>
</dbReference>
<dbReference type="PROSITE" id="PS50163">
    <property type="entry name" value="RECA_3"/>
    <property type="match status" value="1"/>
</dbReference>
<evidence type="ECO:0000255" key="1">
    <source>
        <dbReference type="HAMAP-Rule" id="MF_00268"/>
    </source>
</evidence>
<protein>
    <recommendedName>
        <fullName evidence="1">Protein RecA</fullName>
    </recommendedName>
    <alternativeName>
        <fullName evidence="1">Recombinase A</fullName>
    </alternativeName>
</protein>